<protein>
    <recommendedName>
        <fullName evidence="1">Ribosome maturation factor RimP</fullName>
    </recommendedName>
</protein>
<sequence length="150" mass="16701">MSTLEQKLTEIISAPVEALGYELVGIEFIRGRQSTLRIYIDSDDGITVDACADVSHQVSAVLDVEDPITVAYNLEVSSPGLDRPMFTAEHYTRYLGEEVTLVLRMAMQNRRKWQGIIKAVDGEMITVTVDGKDEVFALSNIQKANLVPHF</sequence>
<keyword id="KW-0963">Cytoplasm</keyword>
<keyword id="KW-0690">Ribosome biogenesis</keyword>
<accession>A4TRI5</accession>
<evidence type="ECO:0000255" key="1">
    <source>
        <dbReference type="HAMAP-Rule" id="MF_01077"/>
    </source>
</evidence>
<comment type="function">
    <text evidence="1">Required for maturation of 30S ribosomal subunits.</text>
</comment>
<comment type="subcellular location">
    <subcellularLocation>
        <location evidence="1">Cytoplasm</location>
    </subcellularLocation>
</comment>
<comment type="similarity">
    <text evidence="1">Belongs to the RimP family.</text>
</comment>
<gene>
    <name evidence="1" type="primary">rimP</name>
    <name type="ordered locus">YPDSF_3547</name>
</gene>
<dbReference type="EMBL" id="CP000668">
    <property type="protein sequence ID" value="ABP41897.1"/>
    <property type="molecule type" value="Genomic_DNA"/>
</dbReference>
<dbReference type="RefSeq" id="WP_002222054.1">
    <property type="nucleotide sequence ID" value="NZ_CP009715.1"/>
</dbReference>
<dbReference type="SMR" id="A4TRI5"/>
<dbReference type="GeneID" id="97457868"/>
<dbReference type="KEGG" id="ypp:YPDSF_3547"/>
<dbReference type="PATRIC" id="fig|386656.14.peg.203"/>
<dbReference type="GO" id="GO:0005829">
    <property type="term" value="C:cytosol"/>
    <property type="evidence" value="ECO:0007669"/>
    <property type="project" value="TreeGrafter"/>
</dbReference>
<dbReference type="GO" id="GO:0000028">
    <property type="term" value="P:ribosomal small subunit assembly"/>
    <property type="evidence" value="ECO:0007669"/>
    <property type="project" value="TreeGrafter"/>
</dbReference>
<dbReference type="GO" id="GO:0006412">
    <property type="term" value="P:translation"/>
    <property type="evidence" value="ECO:0007669"/>
    <property type="project" value="TreeGrafter"/>
</dbReference>
<dbReference type="CDD" id="cd01734">
    <property type="entry name" value="YlxS_C"/>
    <property type="match status" value="1"/>
</dbReference>
<dbReference type="FunFam" id="2.30.30.180:FF:000001">
    <property type="entry name" value="Ribosome maturation factor RimP"/>
    <property type="match status" value="1"/>
</dbReference>
<dbReference type="FunFam" id="3.30.300.70:FF:000001">
    <property type="entry name" value="Ribosome maturation factor RimP"/>
    <property type="match status" value="1"/>
</dbReference>
<dbReference type="Gene3D" id="2.30.30.180">
    <property type="entry name" value="Ribosome maturation factor RimP, C-terminal domain"/>
    <property type="match status" value="1"/>
</dbReference>
<dbReference type="Gene3D" id="3.30.300.70">
    <property type="entry name" value="RimP-like superfamily, N-terminal"/>
    <property type="match status" value="1"/>
</dbReference>
<dbReference type="HAMAP" id="MF_01077">
    <property type="entry name" value="RimP"/>
    <property type="match status" value="1"/>
</dbReference>
<dbReference type="InterPro" id="IPR003728">
    <property type="entry name" value="Ribosome_maturation_RimP"/>
</dbReference>
<dbReference type="InterPro" id="IPR028998">
    <property type="entry name" value="RimP_C"/>
</dbReference>
<dbReference type="InterPro" id="IPR036847">
    <property type="entry name" value="RimP_C_sf"/>
</dbReference>
<dbReference type="InterPro" id="IPR028989">
    <property type="entry name" value="RimP_N"/>
</dbReference>
<dbReference type="InterPro" id="IPR035956">
    <property type="entry name" value="RimP_N_sf"/>
</dbReference>
<dbReference type="NCBIfam" id="NF000927">
    <property type="entry name" value="PRK00092.1-1"/>
    <property type="match status" value="1"/>
</dbReference>
<dbReference type="PANTHER" id="PTHR33867">
    <property type="entry name" value="RIBOSOME MATURATION FACTOR RIMP"/>
    <property type="match status" value="1"/>
</dbReference>
<dbReference type="PANTHER" id="PTHR33867:SF1">
    <property type="entry name" value="RIBOSOME MATURATION FACTOR RIMP"/>
    <property type="match status" value="1"/>
</dbReference>
<dbReference type="Pfam" id="PF17384">
    <property type="entry name" value="DUF150_C"/>
    <property type="match status" value="1"/>
</dbReference>
<dbReference type="Pfam" id="PF02576">
    <property type="entry name" value="RimP_N"/>
    <property type="match status" value="1"/>
</dbReference>
<dbReference type="SUPFAM" id="SSF74942">
    <property type="entry name" value="YhbC-like, C-terminal domain"/>
    <property type="match status" value="1"/>
</dbReference>
<dbReference type="SUPFAM" id="SSF75420">
    <property type="entry name" value="YhbC-like, N-terminal domain"/>
    <property type="match status" value="1"/>
</dbReference>
<feature type="chain" id="PRO_0000384807" description="Ribosome maturation factor RimP">
    <location>
        <begin position="1"/>
        <end position="150"/>
    </location>
</feature>
<name>RIMP_YERPP</name>
<proteinExistence type="inferred from homology"/>
<reference key="1">
    <citation type="submission" date="2007-02" db="EMBL/GenBank/DDBJ databases">
        <title>Complete sequence of chromosome of Yersinia pestis Pestoides F.</title>
        <authorList>
            <consortium name="US DOE Joint Genome Institute"/>
            <person name="Copeland A."/>
            <person name="Lucas S."/>
            <person name="Lapidus A."/>
            <person name="Barry K."/>
            <person name="Detter J.C."/>
            <person name="Glavina del Rio T."/>
            <person name="Hammon N."/>
            <person name="Israni S."/>
            <person name="Dalin E."/>
            <person name="Tice H."/>
            <person name="Pitluck S."/>
            <person name="Di Bartolo G."/>
            <person name="Chain P."/>
            <person name="Malfatti S."/>
            <person name="Shin M."/>
            <person name="Vergez L."/>
            <person name="Schmutz J."/>
            <person name="Larimer F."/>
            <person name="Land M."/>
            <person name="Hauser L."/>
            <person name="Worsham P."/>
            <person name="Chu M."/>
            <person name="Bearden S."/>
            <person name="Garcia E."/>
            <person name="Richardson P."/>
        </authorList>
    </citation>
    <scope>NUCLEOTIDE SEQUENCE [LARGE SCALE GENOMIC DNA]</scope>
    <source>
        <strain>Pestoides F</strain>
    </source>
</reference>
<organism>
    <name type="scientific">Yersinia pestis (strain Pestoides F)</name>
    <dbReference type="NCBI Taxonomy" id="386656"/>
    <lineage>
        <taxon>Bacteria</taxon>
        <taxon>Pseudomonadati</taxon>
        <taxon>Pseudomonadota</taxon>
        <taxon>Gammaproteobacteria</taxon>
        <taxon>Enterobacterales</taxon>
        <taxon>Yersiniaceae</taxon>
        <taxon>Yersinia</taxon>
    </lineage>
</organism>